<reference key="1">
    <citation type="journal article" date="2002" name="Nature">
        <title>Complete genome sequence of the model actinomycete Streptomyces coelicolor A3(2).</title>
        <authorList>
            <person name="Bentley S.D."/>
            <person name="Chater K.F."/>
            <person name="Cerdeno-Tarraga A.-M."/>
            <person name="Challis G.L."/>
            <person name="Thomson N.R."/>
            <person name="James K.D."/>
            <person name="Harris D.E."/>
            <person name="Quail M.A."/>
            <person name="Kieser H."/>
            <person name="Harper D."/>
            <person name="Bateman A."/>
            <person name="Brown S."/>
            <person name="Chandra G."/>
            <person name="Chen C.W."/>
            <person name="Collins M."/>
            <person name="Cronin A."/>
            <person name="Fraser A."/>
            <person name="Goble A."/>
            <person name="Hidalgo J."/>
            <person name="Hornsby T."/>
            <person name="Howarth S."/>
            <person name="Huang C.-H."/>
            <person name="Kieser T."/>
            <person name="Larke L."/>
            <person name="Murphy L.D."/>
            <person name="Oliver K."/>
            <person name="O'Neil S."/>
            <person name="Rabbinowitsch E."/>
            <person name="Rajandream M.A."/>
            <person name="Rutherford K.M."/>
            <person name="Rutter S."/>
            <person name="Seeger K."/>
            <person name="Saunders D."/>
            <person name="Sharp S."/>
            <person name="Squares R."/>
            <person name="Squares S."/>
            <person name="Taylor K."/>
            <person name="Warren T."/>
            <person name="Wietzorrek A."/>
            <person name="Woodward J.R."/>
            <person name="Barrell B.G."/>
            <person name="Parkhill J."/>
            <person name="Hopwood D.A."/>
        </authorList>
    </citation>
    <scope>NUCLEOTIDE SEQUENCE [LARGE SCALE GENOMIC DNA]</scope>
    <source>
        <strain>ATCC BAA-471 / A3(2) / M145</strain>
    </source>
</reference>
<comment type="function">
    <text evidence="1">Catalyzes the isomerization-deamination of galactosamine 6-phosphate to form tagatofuranose 6-phosphate and ammonium ion.</text>
</comment>
<comment type="catalytic activity">
    <reaction evidence="1">
        <text>D-galactosamine 6-phosphate + H2O = D-tagatopyranose 1-phosphate + NH4(+)</text>
        <dbReference type="Rhea" id="RHEA:47680"/>
        <dbReference type="ChEBI" id="CHEBI:15377"/>
        <dbReference type="ChEBI" id="CHEBI:28938"/>
        <dbReference type="ChEBI" id="CHEBI:71674"/>
        <dbReference type="ChEBI" id="CHEBI:138150"/>
    </reaction>
</comment>
<comment type="similarity">
    <text evidence="3">Belongs to the SIS family. AgaS subfamily.</text>
</comment>
<feature type="chain" id="PRO_0000136591" description="Putative D-galactosamine-6-phosphate deaminase AgaS">
    <location>
        <begin position="1"/>
        <end position="385"/>
    </location>
</feature>
<feature type="domain" description="SIS 1" evidence="2">
    <location>
        <begin position="46"/>
        <end position="206"/>
    </location>
</feature>
<feature type="domain" description="SIS 2" evidence="2">
    <location>
        <begin position="217"/>
        <end position="365"/>
    </location>
</feature>
<dbReference type="EC" id="3.5.99.-" evidence="1"/>
<dbReference type="EMBL" id="AL939125">
    <property type="protein sequence ID" value="CAA15806.1"/>
    <property type="molecule type" value="Genomic_DNA"/>
</dbReference>
<dbReference type="PIR" id="T35885">
    <property type="entry name" value="T35885"/>
</dbReference>
<dbReference type="RefSeq" id="NP_629972.1">
    <property type="nucleotide sequence ID" value="NC_003888.3"/>
</dbReference>
<dbReference type="RefSeq" id="WP_011030496.1">
    <property type="nucleotide sequence ID" value="NZ_VNID01000007.1"/>
</dbReference>
<dbReference type="SMR" id="O50523"/>
<dbReference type="STRING" id="100226.gene:17763509"/>
<dbReference type="PaxDb" id="100226-SCO5849"/>
<dbReference type="KEGG" id="sco:SCO5849"/>
<dbReference type="PATRIC" id="fig|100226.15.peg.5948"/>
<dbReference type="eggNOG" id="COG2222">
    <property type="taxonomic scope" value="Bacteria"/>
</dbReference>
<dbReference type="HOGENOM" id="CLU_012520_0_0_11"/>
<dbReference type="InParanoid" id="O50523"/>
<dbReference type="OrthoDB" id="9779207at2"/>
<dbReference type="PhylomeDB" id="O50523"/>
<dbReference type="Proteomes" id="UP000001973">
    <property type="component" value="Chromosome"/>
</dbReference>
<dbReference type="GO" id="GO:0005886">
    <property type="term" value="C:plasma membrane"/>
    <property type="evidence" value="ECO:0000318"/>
    <property type="project" value="GO_Central"/>
</dbReference>
<dbReference type="GO" id="GO:0097367">
    <property type="term" value="F:carbohydrate derivative binding"/>
    <property type="evidence" value="ECO:0007669"/>
    <property type="project" value="InterPro"/>
</dbReference>
<dbReference type="GO" id="GO:0016787">
    <property type="term" value="F:hydrolase activity"/>
    <property type="evidence" value="ECO:0007669"/>
    <property type="project" value="UniProtKB-KW"/>
</dbReference>
<dbReference type="GO" id="GO:0016853">
    <property type="term" value="F:isomerase activity"/>
    <property type="evidence" value="ECO:0007669"/>
    <property type="project" value="InterPro"/>
</dbReference>
<dbReference type="GO" id="GO:1901135">
    <property type="term" value="P:carbohydrate derivative metabolic process"/>
    <property type="evidence" value="ECO:0007669"/>
    <property type="project" value="InterPro"/>
</dbReference>
<dbReference type="GO" id="GO:0009401">
    <property type="term" value="P:phosphoenolpyruvate-dependent sugar phosphotransferase system"/>
    <property type="evidence" value="ECO:0000318"/>
    <property type="project" value="GO_Central"/>
</dbReference>
<dbReference type="CDD" id="cd05010">
    <property type="entry name" value="SIS_AgaS_like"/>
    <property type="match status" value="1"/>
</dbReference>
<dbReference type="CDD" id="cd05008">
    <property type="entry name" value="SIS_GlmS_GlmD_1"/>
    <property type="match status" value="1"/>
</dbReference>
<dbReference type="Gene3D" id="3.40.50.10490">
    <property type="entry name" value="Glucose-6-phosphate isomerase like protein, domain 1"/>
    <property type="match status" value="2"/>
</dbReference>
<dbReference type="InterPro" id="IPR050303">
    <property type="entry name" value="GatZ_KbaZ_carbometab"/>
</dbReference>
<dbReference type="InterPro" id="IPR035466">
    <property type="entry name" value="GlmS/AgaS_SIS"/>
</dbReference>
<dbReference type="InterPro" id="IPR035464">
    <property type="entry name" value="SIS_AgaS"/>
</dbReference>
<dbReference type="InterPro" id="IPR001347">
    <property type="entry name" value="SIS_dom"/>
</dbReference>
<dbReference type="InterPro" id="IPR046348">
    <property type="entry name" value="SIS_dom_sf"/>
</dbReference>
<dbReference type="InterPro" id="IPR014180">
    <property type="entry name" value="Sugar_isomerase_AgaS"/>
</dbReference>
<dbReference type="NCBIfam" id="TIGR02815">
    <property type="entry name" value="agaS_fam"/>
    <property type="match status" value="1"/>
</dbReference>
<dbReference type="PANTHER" id="PTHR32502:SF3">
    <property type="entry name" value="D-GALACTOSAMINE-6-PHOSPHATE DEAMINASE AGAS-RELATED"/>
    <property type="match status" value="1"/>
</dbReference>
<dbReference type="PANTHER" id="PTHR32502">
    <property type="entry name" value="N-ACETYLGALACTOSAMINE PERMEASE II COMPONENT-RELATED"/>
    <property type="match status" value="1"/>
</dbReference>
<dbReference type="Pfam" id="PF01380">
    <property type="entry name" value="SIS"/>
    <property type="match status" value="1"/>
</dbReference>
<dbReference type="SUPFAM" id="SSF53697">
    <property type="entry name" value="SIS domain"/>
    <property type="match status" value="1"/>
</dbReference>
<dbReference type="PROSITE" id="PS51464">
    <property type="entry name" value="SIS"/>
    <property type="match status" value="2"/>
</dbReference>
<evidence type="ECO:0000250" key="1">
    <source>
        <dbReference type="UniProtKB" id="Q9KIP9"/>
    </source>
</evidence>
<evidence type="ECO:0000255" key="2">
    <source>
        <dbReference type="PROSITE-ProRule" id="PRU00797"/>
    </source>
</evidence>
<evidence type="ECO:0000305" key="3"/>
<organism>
    <name type="scientific">Streptomyces coelicolor (strain ATCC BAA-471 / A3(2) / M145)</name>
    <dbReference type="NCBI Taxonomy" id="100226"/>
    <lineage>
        <taxon>Bacteria</taxon>
        <taxon>Bacillati</taxon>
        <taxon>Actinomycetota</taxon>
        <taxon>Actinomycetes</taxon>
        <taxon>Kitasatosporales</taxon>
        <taxon>Streptomycetaceae</taxon>
        <taxon>Streptomyces</taxon>
        <taxon>Streptomyces albidoflavus group</taxon>
    </lineage>
</organism>
<accession>O50523</accession>
<keyword id="KW-0119">Carbohydrate metabolism</keyword>
<keyword id="KW-0378">Hydrolase</keyword>
<keyword id="KW-1185">Reference proteome</keyword>
<keyword id="KW-0677">Repeat</keyword>
<gene>
    <name type="primary">agaS</name>
    <name type="ordered locus">SCO5849</name>
    <name type="ORF">SC9B10.16</name>
</gene>
<sequence length="385" mass="40446">MTTPPGTLPVDDSAVHTVREIAQQPALWREVDRIVGASREALDAFLDPLVARGDLRVVLTGAGTSAFAGQVLQPSLARHLGRRVDAVPTTDLVADPRGCLAEDLPTLLVSFARSGDSPESVAATALADQVLSEVHHLVITCNEQGRLAREHTRRPRSHVLLMPAASNDRGFAMTSSFTCMTLAALLALGKDARDGVAERLARAAESIIEDGAADRTAGALVDRAPERIVFLGSGPLKGLAEESALKVLELTGGTLMAVAESSLGFRHGPKAVLNERSVAVVYVSNDPYTRRYDHDIVAELRGNLPVGSVVAVSAESGAGTEGADAWPLPGLGDVEDAALALPAVVYAQLIALRASQARGLRPDNPFPSGEVNRVVQGVTLHSLND</sequence>
<protein>
    <recommendedName>
        <fullName evidence="3">Putative D-galactosamine-6-phosphate deaminase AgaS</fullName>
        <ecNumber evidence="1">3.5.99.-</ecNumber>
    </recommendedName>
    <alternativeName>
        <fullName evidence="1">Gam-6-P deaminase/isomerase</fullName>
    </alternativeName>
</protein>
<name>AGAS_STRCO</name>
<proteinExistence type="inferred from homology"/>